<evidence type="ECO:0000250" key="1"/>
<evidence type="ECO:0000250" key="2">
    <source>
        <dbReference type="UniProtKB" id="P09217"/>
    </source>
</evidence>
<evidence type="ECO:0000250" key="3">
    <source>
        <dbReference type="UniProtKB" id="Q05513"/>
    </source>
</evidence>
<evidence type="ECO:0000255" key="4">
    <source>
        <dbReference type="PROSITE-ProRule" id="PRU00159"/>
    </source>
</evidence>
<evidence type="ECO:0000255" key="5">
    <source>
        <dbReference type="PROSITE-ProRule" id="PRU00226"/>
    </source>
</evidence>
<evidence type="ECO:0000255" key="6">
    <source>
        <dbReference type="PROSITE-ProRule" id="PRU00618"/>
    </source>
</evidence>
<evidence type="ECO:0000255" key="7">
    <source>
        <dbReference type="PROSITE-ProRule" id="PRU01081"/>
    </source>
</evidence>
<evidence type="ECO:0000255" key="8">
    <source>
        <dbReference type="PROSITE-ProRule" id="PRU10027"/>
    </source>
</evidence>
<evidence type="ECO:0000269" key="9">
    <source>
    </source>
</evidence>
<evidence type="ECO:0000269" key="10">
    <source>
    </source>
</evidence>
<evidence type="ECO:0000269" key="11">
    <source>
    </source>
</evidence>
<evidence type="ECO:0000269" key="12">
    <source>
    </source>
</evidence>
<evidence type="ECO:0000269" key="13">
    <source>
    </source>
</evidence>
<evidence type="ECO:0000269" key="14">
    <source>
    </source>
</evidence>
<evidence type="ECO:0000269" key="15">
    <source>
    </source>
</evidence>
<evidence type="ECO:0000269" key="16">
    <source>
    </source>
</evidence>
<evidence type="ECO:0000303" key="17">
    <source>
    </source>
</evidence>
<evidence type="ECO:0000303" key="18">
    <source>
    </source>
</evidence>
<evidence type="ECO:0000305" key="19"/>
<evidence type="ECO:0007744" key="20">
    <source>
    </source>
</evidence>
<sequence length="592" mass="67682">MPSRTDPKMDRSGGRVRLKAHYGGDILITSVDAMTTFKDLCEEVRDMCGLHQQHPLTLKWVDSEGDPCTVSSQMELEEAFRLVCQGRDEVLIIHVFPSIPEQPGMPCPGEDKSIYRRGARRWRKLYRANGHLFQAKRFNRGAYCGQCSERIWGLSRQGYRCINCKLLVHKRCHVLVPLTCRRHMDSVMPSQEPPVDDKNDGVDLPSEETDGIAYISSSRKHDNIKDDSEDLKPVIDGVDGIKISQGLGLQDFDLIRVIGRGSYAKVLLVRLKKNDQIYAMKVVKKELVHDDEDIDWVQTEKHVFEQASSNPFLVGLHSCFQTTSRLFLVIEYVNGGDLMFHMQRQRKLPEEHARFYAAEICIALNFLHERGIIYRDLKLDNVLLDADGHIKLTDYGMCKEGLGPGDTTSTFCGTPNYIAPEILRGEEYGFSVDWWALGVLMFEMMAGRSPFDIITDNPDMNTEDYLFQVILEKPIRIPRFLSVKASHVLKGFLNKDPKERLGCRPQTGFSDIKSHAFFRSIDWDLLEKKQTLPPFQPQITDDYGLDNFDTQFTSEPVQLTPDDEDVIKRIDQSEFEGFEYINPLLLSAEESV</sequence>
<proteinExistence type="evidence at protein level"/>
<protein>
    <recommendedName>
        <fullName>Protein kinase C zeta type</fullName>
        <ecNumber evidence="16">2.7.11.13</ecNumber>
    </recommendedName>
    <alternativeName>
        <fullName>nPKC-zeta</fullName>
    </alternativeName>
</protein>
<gene>
    <name type="primary">Prkcz</name>
    <name type="synonym">Pkcz</name>
</gene>
<comment type="function">
    <text evidence="3 11 14">Calcium- and diacylglycerol-independent serine/threonine-protein kinase that functions in phosphatidylinositol 3-kinase (PI3K) pathway and mitogen-activated protein (MAP) kinase cascade, and is involved in NF-kappa-B activation, mitogenic signaling, cell proliferation, cell polarity, inflammatory response and maintenance of long-term potentiation (LTP). Upon lipopolysaccharide (LPS) treatment in macrophages, or following mitogenic stimuli, functions downstream of PI3K to activate MAP2K1/MEK1-MAPK1/ERK2 signaling cascade independently of RAF1 activation. Required for insulin-dependent activation of AKT3, but may function as an adapter rather than a direct activator. Upon insulin treatment may act as a downstream effector of PI3K and contribute to the activation of translocation of the glucose transporter SLC2A4/GLUT4 and subsequent glucose transport in adipocytes. In EGF-induced cells, binds and activates MAP2K5/MEK5-MAPK7/ERK5 independently of its kinase activity and can activate JUN promoter through MEF2C. Through binding with SQSTM1/p62, functions in interleukin-1 signaling and activation of NF-kappa-B with the specific adapters RIPK1 and TRAF6. Participates in TNF-dependent transactivation of NF-kappa-B by phosphorylating and activating IKBKB kinase, which in turn leads to the degradation of NF-kappa-B inhibitors. In migrating astrocytes, forms a cytoplasmic complex with PARD6A and is recruited by CDC42 to function in the establishment of cell polarity along with the microtubule motor and dynein. In association with FEZ1, stimulates neuronal differentiation in PC12 cells. In the inflammatory response, is required for the T-helper 2 (Th2) differentiation process, including interleukin production, efficient activation of JAK1 and the subsequent phosphorylation and nuclear translocation of STAT6. May be involved in development of allergic airway inflammation (asthma), a process dependent on Th2 immune response. In the NF-kappa-B-mediated inflammatory response, can relieve SETD6-dependent repression of NF-kappa-B target genes by phosphorylating the RELA subunit at 'Ser-311'. Phosphorylates VAMP2 in vitro (By similarity). Phosphorylates and activates LRRK1, which phosphorylates RAB proteins involved in intracellular trafficking (By similarity).</text>
</comment>
<comment type="function">
    <molecule>Isoform 2</molecule>
    <text evidence="16">Involved in late synaptic long term potentiation phase in CA1 hippocampal cells and long term memory maintenance.</text>
</comment>
<comment type="catalytic activity">
    <reaction evidence="16">
        <text>L-seryl-[protein] + ATP = O-phospho-L-seryl-[protein] + ADP + H(+)</text>
        <dbReference type="Rhea" id="RHEA:17989"/>
        <dbReference type="Rhea" id="RHEA-COMP:9863"/>
        <dbReference type="Rhea" id="RHEA-COMP:11604"/>
        <dbReference type="ChEBI" id="CHEBI:15378"/>
        <dbReference type="ChEBI" id="CHEBI:29999"/>
        <dbReference type="ChEBI" id="CHEBI:30616"/>
        <dbReference type="ChEBI" id="CHEBI:83421"/>
        <dbReference type="ChEBI" id="CHEBI:456216"/>
        <dbReference type="EC" id="2.7.11.13"/>
    </reaction>
</comment>
<comment type="catalytic activity">
    <reaction evidence="16">
        <text>L-threonyl-[protein] + ATP = O-phospho-L-threonyl-[protein] + ADP + H(+)</text>
        <dbReference type="Rhea" id="RHEA:46608"/>
        <dbReference type="Rhea" id="RHEA-COMP:11060"/>
        <dbReference type="Rhea" id="RHEA-COMP:11605"/>
        <dbReference type="ChEBI" id="CHEBI:15378"/>
        <dbReference type="ChEBI" id="CHEBI:30013"/>
        <dbReference type="ChEBI" id="CHEBI:30616"/>
        <dbReference type="ChEBI" id="CHEBI:61977"/>
        <dbReference type="ChEBI" id="CHEBI:456216"/>
        <dbReference type="EC" id="2.7.11.13"/>
    </reaction>
</comment>
<comment type="activity regulation">
    <text evidence="2">Atypical PKCs (PRKCI and PRKCZ) exhibit an elevated basal enzymatic activity (that may be due to the interaction with SMG1 or SQSTM1) and are not regulated by diacylglycerol, phosphatidylserine, phorbol esters or calcium ions. Two specific sites, Thr-410 (activation loop of the kinase domain) and Thr-560 (turn motif), need to be phosphorylated for its full activation. Phosphatidylinositol 3,4,5-trisphosphate might be a physiological activator (By similarity). Isoform 2: Constitutively active (By similarity).</text>
</comment>
<comment type="subunit">
    <text evidence="2 3 12 13">Interacts directly with SQSTM1. Forms a ternary complex with SQSTM1 and KCNAB2. Forms another ternary complex with SQSTM1 and GABRR3. Forms a complex with SQSTM1 and MAP2K5 (By similarity). Interacts with PARD6A, PARD6B and PARD6G. Part of a complex with PARD3, PARD6A or PARD6B or PARD6G and CDC42 or RAC1. Interacts with ADAP1/CENTA1. Interacts (via the protein kinase domain) with WWC1. Forms a tripartite complex with WWC1 and DDR1, but predominantly in the absence of collagen. Interacts with PDPK1 (via N-terminal region) (By similarity). Interacts with WDFY2 (via WD repeats 1-3) (PubMed:16792529). Interacts with VAMP2 (PubMed:17313651). Forms a complex with WDFY2 and VAMP2 (PubMed:17313651). Interacts with APPL1 (By similarity). Interacts with WWC1, WWC2 and WWC3 (By similarity).</text>
</comment>
<comment type="interaction">
    <interactant intactId="EBI-642057">
        <id>Q02956</id>
    </interactant>
    <interactant intactId="EBI-6665091">
        <id>Q62151</id>
        <label>Ager</label>
    </interactant>
    <organismsDiffer>false</organismsDiffer>
    <experiments>7</experiments>
</comment>
<comment type="subcellular location">
    <subcellularLocation>
        <location evidence="3">Cytoplasm</location>
    </subcellularLocation>
    <subcellularLocation>
        <location evidence="3">Endosome</location>
    </subcellularLocation>
    <subcellularLocation>
        <location evidence="3">Cell junction</location>
    </subcellularLocation>
    <subcellularLocation>
        <location evidence="2">Membrane</location>
        <topology evidence="19">Peripheral membrane protein</topology>
    </subcellularLocation>
    <text evidence="2 3 13">In the retina, localizes in the terminals of the rod bipolar cells (By similarity). Associated with endosomes (By similarity). Presence of KRIT1, CDH5 and RAP1B is required for its localization to the cell junction (By similarity). Colocalizes with VAMP2 and WDFY2 in intracellular vesicles (PubMed:17313651). Transiently translocates to the membrane of CA1 hippocampal cells in response to the induction of long term potentiation (By similarity).</text>
</comment>
<comment type="subcellular location">
    <molecule>Isoform 2</molecule>
    <subcellularLocation>
        <location evidence="2">Cytoplasm</location>
    </subcellularLocation>
</comment>
<comment type="alternative products">
    <event type="alternative promoter"/>
    <isoform>
        <id>Q02956-1</id>
        <name>1</name>
        <sequence type="displayed"/>
    </isoform>
    <isoform>
        <id>Q02956-2</id>
        <name>2</name>
        <name evidence="17">PKCzetaII</name>
        <name evidence="18">PMKzeta</name>
        <sequence type="described" ref="VSP_059934"/>
    </isoform>
</comment>
<comment type="tissue specificity">
    <text evidence="9 10 15">Isoform 1: In brain, highly expressed in cerebellar granule neurons and cerebellar astrocytes (at protein level) (PubMed:12932816, PubMed:1487145). Expressed at low levels in testes, lung and kidney (PubMed:1487145, PubMed:23283171). Isoform 2: Specifically expressed in brain where it localizes to cerebellar granule neurons (at protein level) (PubMed:12932816, PubMed:23283171).</text>
</comment>
<comment type="induction">
    <molecule>Isoform 2</molecule>
    <text evidence="16">Induced during synaptic long term potentiation.</text>
</comment>
<comment type="domain">
    <text>The C1 domain does not bind the diacylglycerol (DAG).</text>
</comment>
<comment type="domain">
    <text evidence="1">The PB1 domain mediate mutually exclusive interactions with SQSTM1 and PARD6B.</text>
</comment>
<comment type="PTM">
    <text evidence="1">CDH5 is required for its phosphorylation at Thr-410. Phosphorylated by protein kinase PDPK1; phosphorylation is inhibited by the apoptotic C-terminal cleavage product of PKN2. Phosphorylation at Thr-410 by PI3K activates the kinase (By similarity).</text>
</comment>
<comment type="disruption phenotype">
    <text evidence="15 16">No visible phenotype (PubMed:23283171). Reduced anxiety-like behavior in males (PubMed:23283171). Does not affect long term memory maintenance (PubMed:23283171, PubMed:27187150). However, when the conditions during the establishment of memory are more demanding, spatial long term memory maintenance is slightly affected (PubMed:27187150). Up-regulation of PRKCI/PKCiota protein levels following induction of synaptic long term potentiation abnormally persist. This compensatory mechanism is responsible for the lack of defect in long term memory maintenance in absence of isoform 1 and isoform 2 (PubMed:27187150). Isoform 2: RNAi-mediated knockdown prevents late synaptic long term potentiation and spatial long term memory (PubMed:27187150).</text>
</comment>
<comment type="miscellaneous">
    <molecule>Isoform 2</molecule>
    <text evidence="9">Produced by alternative promoter usage.</text>
</comment>
<comment type="similarity">
    <text evidence="19">Belongs to the protein kinase superfamily. AGC Ser/Thr protein kinase family. PKC subfamily.</text>
</comment>
<keyword id="KW-0877">Alternative promoter usage</keyword>
<keyword id="KW-0067">ATP-binding</keyword>
<keyword id="KW-0965">Cell junction</keyword>
<keyword id="KW-0963">Cytoplasm</keyword>
<keyword id="KW-0967">Endosome</keyword>
<keyword id="KW-0395">Inflammatory response</keyword>
<keyword id="KW-0418">Kinase</keyword>
<keyword id="KW-0472">Membrane</keyword>
<keyword id="KW-0479">Metal-binding</keyword>
<keyword id="KW-0547">Nucleotide-binding</keyword>
<keyword id="KW-0597">Phosphoprotein</keyword>
<keyword id="KW-1185">Reference proteome</keyword>
<keyword id="KW-0723">Serine/threonine-protein kinase</keyword>
<keyword id="KW-0808">Transferase</keyword>
<keyword id="KW-0862">Zinc</keyword>
<keyword id="KW-0863">Zinc-finger</keyword>
<name>KPCZ_MOUSE</name>
<dbReference type="EC" id="2.7.11.13" evidence="16"/>
<dbReference type="EMBL" id="M94632">
    <property type="protein sequence ID" value="AAA39983.1"/>
    <property type="molecule type" value="mRNA"/>
</dbReference>
<dbReference type="EMBL" id="AB110830">
    <property type="protein sequence ID" value="BAC76975.1"/>
    <property type="molecule type" value="mRNA"/>
</dbReference>
<dbReference type="EMBL" id="AK147300">
    <property type="protein sequence ID" value="BAE27832.1"/>
    <property type="molecule type" value="mRNA"/>
</dbReference>
<dbReference type="EMBL" id="AL670227">
    <property type="status" value="NOT_ANNOTATED_CDS"/>
    <property type="molecule type" value="Genomic_DNA"/>
</dbReference>
<dbReference type="EMBL" id="AL670413">
    <property type="status" value="NOT_ANNOTATED_CDS"/>
    <property type="molecule type" value="Genomic_DNA"/>
</dbReference>
<dbReference type="EMBL" id="CH466594">
    <property type="protein sequence ID" value="EDL15000.1"/>
    <property type="molecule type" value="Genomic_DNA"/>
</dbReference>
<dbReference type="CCDS" id="CCDS19026.1">
    <molecule id="Q02956-1"/>
</dbReference>
<dbReference type="CCDS" id="CCDS19027.1">
    <molecule id="Q02956-2"/>
</dbReference>
<dbReference type="PIR" id="JC1480">
    <property type="entry name" value="JC1480"/>
</dbReference>
<dbReference type="RefSeq" id="NP_001034168.1">
    <molecule id="Q02956-2"/>
    <property type="nucleotide sequence ID" value="NM_001039079.3"/>
</dbReference>
<dbReference type="RefSeq" id="NP_032886.2">
    <molecule id="Q02956-1"/>
    <property type="nucleotide sequence ID" value="NM_008860.4"/>
</dbReference>
<dbReference type="RefSeq" id="XP_006538719.1">
    <molecule id="Q02956-2"/>
    <property type="nucleotide sequence ID" value="XM_006538656.4"/>
</dbReference>
<dbReference type="RefSeq" id="XP_017175531.1">
    <molecule id="Q02956-2"/>
    <property type="nucleotide sequence ID" value="XM_017320042.3"/>
</dbReference>
<dbReference type="RefSeq" id="XP_030109177.1">
    <molecule id="Q02956-2"/>
    <property type="nucleotide sequence ID" value="XM_030253317.1"/>
</dbReference>
<dbReference type="RefSeq" id="XP_036019727.1">
    <molecule id="Q02956-2"/>
    <property type="nucleotide sequence ID" value="XM_036163834.1"/>
</dbReference>
<dbReference type="SMR" id="Q02956"/>
<dbReference type="BioGRID" id="202203">
    <property type="interactions" value="34"/>
</dbReference>
<dbReference type="CORUM" id="Q02956"/>
<dbReference type="ELM" id="Q02956"/>
<dbReference type="FunCoup" id="Q02956">
    <property type="interactions" value="1864"/>
</dbReference>
<dbReference type="IntAct" id="Q02956">
    <property type="interactions" value="18"/>
</dbReference>
<dbReference type="MINT" id="Q02956"/>
<dbReference type="STRING" id="10090.ENSMUSP00000030922"/>
<dbReference type="GlyGen" id="Q02956">
    <property type="glycosylation" value="2 sites, 1 O-linked glycan (2 sites)"/>
</dbReference>
<dbReference type="iPTMnet" id="Q02956"/>
<dbReference type="PhosphoSitePlus" id="Q02956"/>
<dbReference type="PaxDb" id="10090-ENSMUSP00000030922"/>
<dbReference type="ProteomicsDB" id="264865">
    <molecule id="Q02956-1"/>
</dbReference>
<dbReference type="Antibodypedia" id="3869">
    <property type="antibodies" value="849 antibodies from 45 providers"/>
</dbReference>
<dbReference type="DNASU" id="18762"/>
<dbReference type="Ensembl" id="ENSMUST00000030922.15">
    <molecule id="Q02956-1"/>
    <property type="protein sequence ID" value="ENSMUSP00000030922.8"/>
    <property type="gene ID" value="ENSMUSG00000029053.17"/>
</dbReference>
<dbReference type="Ensembl" id="ENSMUST00000103178.11">
    <molecule id="Q02956-2"/>
    <property type="protein sequence ID" value="ENSMUSP00000099467.5"/>
    <property type="gene ID" value="ENSMUSG00000029053.17"/>
</dbReference>
<dbReference type="GeneID" id="18762"/>
<dbReference type="KEGG" id="mmu:18762"/>
<dbReference type="UCSC" id="uc008wdc.2">
    <molecule id="Q02956-1"/>
    <property type="organism name" value="mouse"/>
</dbReference>
<dbReference type="AGR" id="MGI:97602"/>
<dbReference type="CTD" id="5590"/>
<dbReference type="MGI" id="MGI:97602">
    <property type="gene designation" value="Prkcz"/>
</dbReference>
<dbReference type="VEuPathDB" id="HostDB:ENSMUSG00000029053"/>
<dbReference type="eggNOG" id="KOG0695">
    <property type="taxonomic scope" value="Eukaryota"/>
</dbReference>
<dbReference type="GeneTree" id="ENSGT00940000153497"/>
<dbReference type="HOGENOM" id="CLU_000288_63_29_1"/>
<dbReference type="InParanoid" id="Q02956"/>
<dbReference type="OMA" id="DKMAGLC"/>
<dbReference type="OrthoDB" id="63267at2759"/>
<dbReference type="PhylomeDB" id="Q02956"/>
<dbReference type="TreeFam" id="TF102004"/>
<dbReference type="BRENDA" id="2.7.11.13">
    <property type="organism ID" value="3474"/>
</dbReference>
<dbReference type="Reactome" id="R-MMU-2173791">
    <property type="pathway name" value="TGF-beta receptor signaling in EMT (epithelial to mesenchymal transition)"/>
</dbReference>
<dbReference type="Reactome" id="R-MMU-5218921">
    <property type="pathway name" value="VEGFR2 mediated cell proliferation"/>
</dbReference>
<dbReference type="Reactome" id="R-MMU-5668599">
    <property type="pathway name" value="RHO GTPases Activate NADPH Oxidases"/>
</dbReference>
<dbReference type="Reactome" id="R-MMU-9634635">
    <property type="pathway name" value="Estrogen-stimulated signaling through PRKCZ"/>
</dbReference>
<dbReference type="BioGRID-ORCS" id="18762">
    <property type="hits" value="1 hit in 80 CRISPR screens"/>
</dbReference>
<dbReference type="CD-CODE" id="01CA17F3">
    <property type="entry name" value="Centrosome"/>
</dbReference>
<dbReference type="PRO" id="PR:Q02956"/>
<dbReference type="Proteomes" id="UP000000589">
    <property type="component" value="Chromosome 4"/>
</dbReference>
<dbReference type="RNAct" id="Q02956">
    <property type="molecule type" value="protein"/>
</dbReference>
<dbReference type="Bgee" id="ENSMUSG00000029053">
    <property type="expression patterns" value="Expressed in superior frontal gyrus and 178 other cell types or tissues"/>
</dbReference>
<dbReference type="ExpressionAtlas" id="Q02956">
    <property type="expression patterns" value="baseline and differential"/>
</dbReference>
<dbReference type="GO" id="GO:0045179">
    <property type="term" value="C:apical cortex"/>
    <property type="evidence" value="ECO:0000314"/>
    <property type="project" value="MGI"/>
</dbReference>
<dbReference type="GO" id="GO:0016324">
    <property type="term" value="C:apical plasma membrane"/>
    <property type="evidence" value="ECO:0000314"/>
    <property type="project" value="MGI"/>
</dbReference>
<dbReference type="GO" id="GO:0043203">
    <property type="term" value="C:axon hillock"/>
    <property type="evidence" value="ECO:0000314"/>
    <property type="project" value="MGI"/>
</dbReference>
<dbReference type="GO" id="GO:0005923">
    <property type="term" value="C:bicellular tight junction"/>
    <property type="evidence" value="ECO:0000314"/>
    <property type="project" value="MGI"/>
</dbReference>
<dbReference type="GO" id="GO:0005938">
    <property type="term" value="C:cell cortex"/>
    <property type="evidence" value="ECO:0000314"/>
    <property type="project" value="MGI"/>
</dbReference>
<dbReference type="GO" id="GO:0005911">
    <property type="term" value="C:cell-cell junction"/>
    <property type="evidence" value="ECO:0000250"/>
    <property type="project" value="UniProtKB"/>
</dbReference>
<dbReference type="GO" id="GO:0036064">
    <property type="term" value="C:ciliary basal body"/>
    <property type="evidence" value="ECO:0007669"/>
    <property type="project" value="Ensembl"/>
</dbReference>
<dbReference type="GO" id="GO:0005737">
    <property type="term" value="C:cytoplasm"/>
    <property type="evidence" value="ECO:0000314"/>
    <property type="project" value="MGI"/>
</dbReference>
<dbReference type="GO" id="GO:0005829">
    <property type="term" value="C:cytosol"/>
    <property type="evidence" value="ECO:0007669"/>
    <property type="project" value="Ensembl"/>
</dbReference>
<dbReference type="GO" id="GO:0005768">
    <property type="term" value="C:endosome"/>
    <property type="evidence" value="ECO:0007669"/>
    <property type="project" value="UniProtKB-SubCell"/>
</dbReference>
<dbReference type="GO" id="GO:0005815">
    <property type="term" value="C:microtubule organizing center"/>
    <property type="evidence" value="ECO:0000316"/>
    <property type="project" value="MGI"/>
</dbReference>
<dbReference type="GO" id="GO:0035748">
    <property type="term" value="C:myelin sheath abaxonal region"/>
    <property type="evidence" value="ECO:0000314"/>
    <property type="project" value="BHF-UCL"/>
</dbReference>
<dbReference type="GO" id="GO:0005635">
    <property type="term" value="C:nuclear envelope"/>
    <property type="evidence" value="ECO:0000314"/>
    <property type="project" value="MGI"/>
</dbReference>
<dbReference type="GO" id="GO:0016363">
    <property type="term" value="C:nuclear matrix"/>
    <property type="evidence" value="ECO:0000314"/>
    <property type="project" value="MGI"/>
</dbReference>
<dbReference type="GO" id="GO:0005634">
    <property type="term" value="C:nucleus"/>
    <property type="evidence" value="ECO:0000314"/>
    <property type="project" value="MGI"/>
</dbReference>
<dbReference type="GO" id="GO:0005886">
    <property type="term" value="C:plasma membrane"/>
    <property type="evidence" value="ECO:0000314"/>
    <property type="project" value="MGI"/>
</dbReference>
<dbReference type="GO" id="GO:0031982">
    <property type="term" value="C:vesicle"/>
    <property type="evidence" value="ECO:0000314"/>
    <property type="project" value="UniProtKB"/>
</dbReference>
<dbReference type="GO" id="GO:0005524">
    <property type="term" value="F:ATP binding"/>
    <property type="evidence" value="ECO:0007669"/>
    <property type="project" value="UniProtKB-KW"/>
</dbReference>
<dbReference type="GO" id="GO:0004697">
    <property type="term" value="F:diacylglycerol-dependent serine/threonine kinase activity"/>
    <property type="evidence" value="ECO:0007669"/>
    <property type="project" value="UniProtKB-EC"/>
</dbReference>
<dbReference type="GO" id="GO:0043560">
    <property type="term" value="F:insulin receptor substrate binding"/>
    <property type="evidence" value="ECO:0007669"/>
    <property type="project" value="Ensembl"/>
</dbReference>
<dbReference type="GO" id="GO:0004672">
    <property type="term" value="F:protein kinase activity"/>
    <property type="evidence" value="ECO:0000314"/>
    <property type="project" value="MGI"/>
</dbReference>
<dbReference type="GO" id="GO:0106310">
    <property type="term" value="F:protein serine kinase activity"/>
    <property type="evidence" value="ECO:0007669"/>
    <property type="project" value="RHEA"/>
</dbReference>
<dbReference type="GO" id="GO:0004674">
    <property type="term" value="F:protein serine/threonine kinase activity"/>
    <property type="evidence" value="ECO:0000314"/>
    <property type="project" value="UniProtKB"/>
</dbReference>
<dbReference type="GO" id="GO:0008270">
    <property type="term" value="F:zinc ion binding"/>
    <property type="evidence" value="ECO:0007669"/>
    <property type="project" value="UniProtKB-KW"/>
</dbReference>
<dbReference type="GO" id="GO:0030010">
    <property type="term" value="P:establishment of cell polarity"/>
    <property type="evidence" value="ECO:0000250"/>
    <property type="project" value="UniProtKB"/>
</dbReference>
<dbReference type="GO" id="GO:0006954">
    <property type="term" value="P:inflammatory response"/>
    <property type="evidence" value="ECO:0007669"/>
    <property type="project" value="UniProtKB-KW"/>
</dbReference>
<dbReference type="GO" id="GO:0060291">
    <property type="term" value="P:long-term synaptic potentiation"/>
    <property type="evidence" value="ECO:0000250"/>
    <property type="project" value="UniProtKB"/>
</dbReference>
<dbReference type="GO" id="GO:0000226">
    <property type="term" value="P:microtubule cytoskeleton organization"/>
    <property type="evidence" value="ECO:0000315"/>
    <property type="project" value="MGI"/>
</dbReference>
<dbReference type="GO" id="GO:0046627">
    <property type="term" value="P:negative regulation of insulin receptor signaling pathway"/>
    <property type="evidence" value="ECO:0007669"/>
    <property type="project" value="Ensembl"/>
</dbReference>
<dbReference type="GO" id="GO:0031333">
    <property type="term" value="P:negative regulation of protein-containing complex assembly"/>
    <property type="evidence" value="ECO:0007669"/>
    <property type="project" value="Ensembl"/>
</dbReference>
<dbReference type="GO" id="GO:1990138">
    <property type="term" value="P:neuron projection extension"/>
    <property type="evidence" value="ECO:0000316"/>
    <property type="project" value="MGI"/>
</dbReference>
<dbReference type="GO" id="GO:0070374">
    <property type="term" value="P:positive regulation of ERK1 and ERK2 cascade"/>
    <property type="evidence" value="ECO:0000250"/>
    <property type="project" value="UniProtKB"/>
</dbReference>
<dbReference type="GO" id="GO:2000463">
    <property type="term" value="P:positive regulation of excitatory postsynaptic potential"/>
    <property type="evidence" value="ECO:0000250"/>
    <property type="project" value="UniProtKB"/>
</dbReference>
<dbReference type="GO" id="GO:0046628">
    <property type="term" value="P:positive regulation of insulin receptor signaling pathway"/>
    <property type="evidence" value="ECO:0000250"/>
    <property type="project" value="UniProtKB"/>
</dbReference>
<dbReference type="GO" id="GO:0032733">
    <property type="term" value="P:positive regulation of interleukin-10 production"/>
    <property type="evidence" value="ECO:0000315"/>
    <property type="project" value="UniProtKB"/>
</dbReference>
<dbReference type="GO" id="GO:0032736">
    <property type="term" value="P:positive regulation of interleukin-13 production"/>
    <property type="evidence" value="ECO:0000315"/>
    <property type="project" value="UniProtKB"/>
</dbReference>
<dbReference type="GO" id="GO:0032753">
    <property type="term" value="P:positive regulation of interleukin-4 production"/>
    <property type="evidence" value="ECO:0000315"/>
    <property type="project" value="UniProtKB"/>
</dbReference>
<dbReference type="GO" id="GO:0032754">
    <property type="term" value="P:positive regulation of interleukin-5 production"/>
    <property type="evidence" value="ECO:0000315"/>
    <property type="project" value="UniProtKB"/>
</dbReference>
<dbReference type="GO" id="GO:0051092">
    <property type="term" value="P:positive regulation of NF-kappaB transcription factor activity"/>
    <property type="evidence" value="ECO:0000250"/>
    <property type="project" value="UniProtKB"/>
</dbReference>
<dbReference type="GO" id="GO:2000553">
    <property type="term" value="P:positive regulation of T-helper 2 cell cytokine production"/>
    <property type="evidence" value="ECO:0000315"/>
    <property type="project" value="UniProtKB"/>
</dbReference>
<dbReference type="GO" id="GO:0045630">
    <property type="term" value="P:positive regulation of T-helper 2 cell differentiation"/>
    <property type="evidence" value="ECO:0000315"/>
    <property type="project" value="UniProtKB"/>
</dbReference>
<dbReference type="GO" id="GO:0072659">
    <property type="term" value="P:protein localization to plasma membrane"/>
    <property type="evidence" value="ECO:0000315"/>
    <property type="project" value="MGI"/>
</dbReference>
<dbReference type="CDD" id="cd06404">
    <property type="entry name" value="PB1_aPKC"/>
    <property type="match status" value="1"/>
</dbReference>
<dbReference type="FunFam" id="1.10.510.10:FF:000048">
    <property type="entry name" value="Protein kinase C"/>
    <property type="match status" value="1"/>
</dbReference>
<dbReference type="FunFam" id="3.10.20.90:FF:000071">
    <property type="entry name" value="Protein kinase C"/>
    <property type="match status" value="1"/>
</dbReference>
<dbReference type="FunFam" id="3.30.200.20:FF:000070">
    <property type="entry name" value="Protein kinase C"/>
    <property type="match status" value="1"/>
</dbReference>
<dbReference type="FunFam" id="3.30.60.20:FF:000012">
    <property type="entry name" value="Protein kinase C"/>
    <property type="match status" value="1"/>
</dbReference>
<dbReference type="Gene3D" id="3.30.60.20">
    <property type="match status" value="1"/>
</dbReference>
<dbReference type="Gene3D" id="3.10.20.90">
    <property type="entry name" value="Phosphatidylinositol 3-kinase Catalytic Subunit, Chain A, domain 1"/>
    <property type="match status" value="1"/>
</dbReference>
<dbReference type="Gene3D" id="3.30.200.20">
    <property type="entry name" value="Phosphorylase Kinase, domain 1"/>
    <property type="match status" value="1"/>
</dbReference>
<dbReference type="Gene3D" id="1.10.510.10">
    <property type="entry name" value="Transferase(Phosphotransferase) domain 1"/>
    <property type="match status" value="1"/>
</dbReference>
<dbReference type="InterPro" id="IPR000961">
    <property type="entry name" value="AGC-kinase_C"/>
</dbReference>
<dbReference type="InterPro" id="IPR046349">
    <property type="entry name" value="C1-like_sf"/>
</dbReference>
<dbReference type="InterPro" id="IPR020454">
    <property type="entry name" value="DAG/PE-bd"/>
</dbReference>
<dbReference type="InterPro" id="IPR011009">
    <property type="entry name" value="Kinase-like_dom_sf"/>
</dbReference>
<dbReference type="InterPro" id="IPR053793">
    <property type="entry name" value="PB1-like"/>
</dbReference>
<dbReference type="InterPro" id="IPR034877">
    <property type="entry name" value="PB1_aPKC"/>
</dbReference>
<dbReference type="InterPro" id="IPR000270">
    <property type="entry name" value="PB1_dom"/>
</dbReference>
<dbReference type="InterPro" id="IPR002219">
    <property type="entry name" value="PE/DAG-bd"/>
</dbReference>
<dbReference type="InterPro" id="IPR012233">
    <property type="entry name" value="PKC"/>
</dbReference>
<dbReference type="InterPro" id="IPR017892">
    <property type="entry name" value="Pkinase_C"/>
</dbReference>
<dbReference type="InterPro" id="IPR000719">
    <property type="entry name" value="Prot_kinase_dom"/>
</dbReference>
<dbReference type="InterPro" id="IPR017441">
    <property type="entry name" value="Protein_kinase_ATP_BS"/>
</dbReference>
<dbReference type="InterPro" id="IPR008271">
    <property type="entry name" value="Ser/Thr_kinase_AS"/>
</dbReference>
<dbReference type="PANTHER" id="PTHR24351">
    <property type="entry name" value="RIBOSOMAL PROTEIN S6 KINASE"/>
    <property type="match status" value="1"/>
</dbReference>
<dbReference type="Pfam" id="PF00130">
    <property type="entry name" value="C1_1"/>
    <property type="match status" value="1"/>
</dbReference>
<dbReference type="Pfam" id="PF00564">
    <property type="entry name" value="PB1"/>
    <property type="match status" value="1"/>
</dbReference>
<dbReference type="Pfam" id="PF00069">
    <property type="entry name" value="Pkinase"/>
    <property type="match status" value="1"/>
</dbReference>
<dbReference type="Pfam" id="PF00433">
    <property type="entry name" value="Pkinase_C"/>
    <property type="match status" value="1"/>
</dbReference>
<dbReference type="PIRSF" id="PIRSF000554">
    <property type="entry name" value="PKC_zeta"/>
    <property type="match status" value="1"/>
</dbReference>
<dbReference type="PRINTS" id="PR00008">
    <property type="entry name" value="DAGPEDOMAIN"/>
</dbReference>
<dbReference type="SMART" id="SM00109">
    <property type="entry name" value="C1"/>
    <property type="match status" value="1"/>
</dbReference>
<dbReference type="SMART" id="SM00666">
    <property type="entry name" value="PB1"/>
    <property type="match status" value="1"/>
</dbReference>
<dbReference type="SMART" id="SM00133">
    <property type="entry name" value="S_TK_X"/>
    <property type="match status" value="1"/>
</dbReference>
<dbReference type="SMART" id="SM00220">
    <property type="entry name" value="S_TKc"/>
    <property type="match status" value="1"/>
</dbReference>
<dbReference type="SUPFAM" id="SSF54277">
    <property type="entry name" value="CAD &amp; PB1 domains"/>
    <property type="match status" value="1"/>
</dbReference>
<dbReference type="SUPFAM" id="SSF57889">
    <property type="entry name" value="Cysteine-rich domain"/>
    <property type="match status" value="1"/>
</dbReference>
<dbReference type="SUPFAM" id="SSF56112">
    <property type="entry name" value="Protein kinase-like (PK-like)"/>
    <property type="match status" value="1"/>
</dbReference>
<dbReference type="PROSITE" id="PS51285">
    <property type="entry name" value="AGC_KINASE_CTER"/>
    <property type="match status" value="1"/>
</dbReference>
<dbReference type="PROSITE" id="PS51745">
    <property type="entry name" value="PB1"/>
    <property type="match status" value="1"/>
</dbReference>
<dbReference type="PROSITE" id="PS00107">
    <property type="entry name" value="PROTEIN_KINASE_ATP"/>
    <property type="match status" value="1"/>
</dbReference>
<dbReference type="PROSITE" id="PS50011">
    <property type="entry name" value="PROTEIN_KINASE_DOM"/>
    <property type="match status" value="1"/>
</dbReference>
<dbReference type="PROSITE" id="PS00108">
    <property type="entry name" value="PROTEIN_KINASE_ST"/>
    <property type="match status" value="1"/>
</dbReference>
<dbReference type="PROSITE" id="PS00479">
    <property type="entry name" value="ZF_DAG_PE_1"/>
    <property type="match status" value="1"/>
</dbReference>
<dbReference type="PROSITE" id="PS50081">
    <property type="entry name" value="ZF_DAG_PE_2"/>
    <property type="match status" value="1"/>
</dbReference>
<organism>
    <name type="scientific">Mus musculus</name>
    <name type="common">Mouse</name>
    <dbReference type="NCBI Taxonomy" id="10090"/>
    <lineage>
        <taxon>Eukaryota</taxon>
        <taxon>Metazoa</taxon>
        <taxon>Chordata</taxon>
        <taxon>Craniata</taxon>
        <taxon>Vertebrata</taxon>
        <taxon>Euteleostomi</taxon>
        <taxon>Mammalia</taxon>
        <taxon>Eutheria</taxon>
        <taxon>Euarchontoglires</taxon>
        <taxon>Glires</taxon>
        <taxon>Rodentia</taxon>
        <taxon>Myomorpha</taxon>
        <taxon>Muroidea</taxon>
        <taxon>Muridae</taxon>
        <taxon>Murinae</taxon>
        <taxon>Mus</taxon>
        <taxon>Mus</taxon>
    </lineage>
</organism>
<reference key="1">
    <citation type="journal article" date="1992" name="Gene">
        <title>The cDNA sequence, expression pattern and protein characteristics of mouse protein kinase C-zeta.</title>
        <authorList>
            <person name="Goodnight J."/>
            <person name="Kazanietz M.G."/>
            <person name="Blumberg P.M."/>
            <person name="Mushinski F.J."/>
            <person name="Mischak H."/>
        </authorList>
    </citation>
    <scope>NUCLEOTIDE SEQUENCE [MRNA] (ISOFORM 1)</scope>
    <scope>TISSUE SPECIFICITY (ISOFORM 1)</scope>
</reference>
<reference key="2">
    <citation type="journal article" date="2003" name="Neurosci. Lett.">
        <title>PKC zeta II, a small molecule of protein kinase C zeta, specifically expressed in the mouse brain.</title>
        <authorList>
            <person name="Hirai T."/>
            <person name="Niino Y.S."/>
            <person name="Chida K."/>
        </authorList>
    </citation>
    <scope>NUCLEOTIDE SEQUENCE [MRNA] (ISOFORM 2)</scope>
    <scope>TISSUE SPECIFICITY (ISOFORMS 1 AND 2)</scope>
    <source>
        <tissue>Brain</tissue>
    </source>
</reference>
<reference key="3">
    <citation type="journal article" date="2005" name="Science">
        <title>The transcriptional landscape of the mammalian genome.</title>
        <authorList>
            <person name="Carninci P."/>
            <person name="Kasukawa T."/>
            <person name="Katayama S."/>
            <person name="Gough J."/>
            <person name="Frith M.C."/>
            <person name="Maeda N."/>
            <person name="Oyama R."/>
            <person name="Ravasi T."/>
            <person name="Lenhard B."/>
            <person name="Wells C."/>
            <person name="Kodzius R."/>
            <person name="Shimokawa K."/>
            <person name="Bajic V.B."/>
            <person name="Brenner S.E."/>
            <person name="Batalov S."/>
            <person name="Forrest A.R."/>
            <person name="Zavolan M."/>
            <person name="Davis M.J."/>
            <person name="Wilming L.G."/>
            <person name="Aidinis V."/>
            <person name="Allen J.E."/>
            <person name="Ambesi-Impiombato A."/>
            <person name="Apweiler R."/>
            <person name="Aturaliya R.N."/>
            <person name="Bailey T.L."/>
            <person name="Bansal M."/>
            <person name="Baxter L."/>
            <person name="Beisel K.W."/>
            <person name="Bersano T."/>
            <person name="Bono H."/>
            <person name="Chalk A.M."/>
            <person name="Chiu K.P."/>
            <person name="Choudhary V."/>
            <person name="Christoffels A."/>
            <person name="Clutterbuck D.R."/>
            <person name="Crowe M.L."/>
            <person name="Dalla E."/>
            <person name="Dalrymple B.P."/>
            <person name="de Bono B."/>
            <person name="Della Gatta G."/>
            <person name="di Bernardo D."/>
            <person name="Down T."/>
            <person name="Engstrom P."/>
            <person name="Fagiolini M."/>
            <person name="Faulkner G."/>
            <person name="Fletcher C.F."/>
            <person name="Fukushima T."/>
            <person name="Furuno M."/>
            <person name="Futaki S."/>
            <person name="Gariboldi M."/>
            <person name="Georgii-Hemming P."/>
            <person name="Gingeras T.R."/>
            <person name="Gojobori T."/>
            <person name="Green R.E."/>
            <person name="Gustincich S."/>
            <person name="Harbers M."/>
            <person name="Hayashi Y."/>
            <person name="Hensch T.K."/>
            <person name="Hirokawa N."/>
            <person name="Hill D."/>
            <person name="Huminiecki L."/>
            <person name="Iacono M."/>
            <person name="Ikeo K."/>
            <person name="Iwama A."/>
            <person name="Ishikawa T."/>
            <person name="Jakt M."/>
            <person name="Kanapin A."/>
            <person name="Katoh M."/>
            <person name="Kawasawa Y."/>
            <person name="Kelso J."/>
            <person name="Kitamura H."/>
            <person name="Kitano H."/>
            <person name="Kollias G."/>
            <person name="Krishnan S.P."/>
            <person name="Kruger A."/>
            <person name="Kummerfeld S.K."/>
            <person name="Kurochkin I.V."/>
            <person name="Lareau L.F."/>
            <person name="Lazarevic D."/>
            <person name="Lipovich L."/>
            <person name="Liu J."/>
            <person name="Liuni S."/>
            <person name="McWilliam S."/>
            <person name="Madan Babu M."/>
            <person name="Madera M."/>
            <person name="Marchionni L."/>
            <person name="Matsuda H."/>
            <person name="Matsuzawa S."/>
            <person name="Miki H."/>
            <person name="Mignone F."/>
            <person name="Miyake S."/>
            <person name="Morris K."/>
            <person name="Mottagui-Tabar S."/>
            <person name="Mulder N."/>
            <person name="Nakano N."/>
            <person name="Nakauchi H."/>
            <person name="Ng P."/>
            <person name="Nilsson R."/>
            <person name="Nishiguchi S."/>
            <person name="Nishikawa S."/>
            <person name="Nori F."/>
            <person name="Ohara O."/>
            <person name="Okazaki Y."/>
            <person name="Orlando V."/>
            <person name="Pang K.C."/>
            <person name="Pavan W.J."/>
            <person name="Pavesi G."/>
            <person name="Pesole G."/>
            <person name="Petrovsky N."/>
            <person name="Piazza S."/>
            <person name="Reed J."/>
            <person name="Reid J.F."/>
            <person name="Ring B.Z."/>
            <person name="Ringwald M."/>
            <person name="Rost B."/>
            <person name="Ruan Y."/>
            <person name="Salzberg S.L."/>
            <person name="Sandelin A."/>
            <person name="Schneider C."/>
            <person name="Schoenbach C."/>
            <person name="Sekiguchi K."/>
            <person name="Semple C.A."/>
            <person name="Seno S."/>
            <person name="Sessa L."/>
            <person name="Sheng Y."/>
            <person name="Shibata Y."/>
            <person name="Shimada H."/>
            <person name="Shimada K."/>
            <person name="Silva D."/>
            <person name="Sinclair B."/>
            <person name="Sperling S."/>
            <person name="Stupka E."/>
            <person name="Sugiura K."/>
            <person name="Sultana R."/>
            <person name="Takenaka Y."/>
            <person name="Taki K."/>
            <person name="Tammoja K."/>
            <person name="Tan S.L."/>
            <person name="Tang S."/>
            <person name="Taylor M.S."/>
            <person name="Tegner J."/>
            <person name="Teichmann S.A."/>
            <person name="Ueda H.R."/>
            <person name="van Nimwegen E."/>
            <person name="Verardo R."/>
            <person name="Wei C.L."/>
            <person name="Yagi K."/>
            <person name="Yamanishi H."/>
            <person name="Zabarovsky E."/>
            <person name="Zhu S."/>
            <person name="Zimmer A."/>
            <person name="Hide W."/>
            <person name="Bult C."/>
            <person name="Grimmond S.M."/>
            <person name="Teasdale R.D."/>
            <person name="Liu E.T."/>
            <person name="Brusic V."/>
            <person name="Quackenbush J."/>
            <person name="Wahlestedt C."/>
            <person name="Mattick J.S."/>
            <person name="Hume D.A."/>
            <person name="Kai C."/>
            <person name="Sasaki D."/>
            <person name="Tomaru Y."/>
            <person name="Fukuda S."/>
            <person name="Kanamori-Katayama M."/>
            <person name="Suzuki M."/>
            <person name="Aoki J."/>
            <person name="Arakawa T."/>
            <person name="Iida J."/>
            <person name="Imamura K."/>
            <person name="Itoh M."/>
            <person name="Kato T."/>
            <person name="Kawaji H."/>
            <person name="Kawagashira N."/>
            <person name="Kawashima T."/>
            <person name="Kojima M."/>
            <person name="Kondo S."/>
            <person name="Konno H."/>
            <person name="Nakano K."/>
            <person name="Ninomiya N."/>
            <person name="Nishio T."/>
            <person name="Okada M."/>
            <person name="Plessy C."/>
            <person name="Shibata K."/>
            <person name="Shiraki T."/>
            <person name="Suzuki S."/>
            <person name="Tagami M."/>
            <person name="Waki K."/>
            <person name="Watahiki A."/>
            <person name="Okamura-Oho Y."/>
            <person name="Suzuki H."/>
            <person name="Kawai J."/>
            <person name="Hayashizaki Y."/>
        </authorList>
    </citation>
    <scope>NUCLEOTIDE SEQUENCE [LARGE SCALE MRNA] (ISOFORM 2)</scope>
</reference>
<reference key="4">
    <citation type="journal article" date="2009" name="PLoS Biol.">
        <title>Lineage-specific biology revealed by a finished genome assembly of the mouse.</title>
        <authorList>
            <person name="Church D.M."/>
            <person name="Goodstadt L."/>
            <person name="Hillier L.W."/>
            <person name="Zody M.C."/>
            <person name="Goldstein S."/>
            <person name="She X."/>
            <person name="Bult C.J."/>
            <person name="Agarwala R."/>
            <person name="Cherry J.L."/>
            <person name="DiCuccio M."/>
            <person name="Hlavina W."/>
            <person name="Kapustin Y."/>
            <person name="Meric P."/>
            <person name="Maglott D."/>
            <person name="Birtle Z."/>
            <person name="Marques A.C."/>
            <person name="Graves T."/>
            <person name="Zhou S."/>
            <person name="Teague B."/>
            <person name="Potamousis K."/>
            <person name="Churas C."/>
            <person name="Place M."/>
            <person name="Herschleb J."/>
            <person name="Runnheim R."/>
            <person name="Forrest D."/>
            <person name="Amos-Landgraf J."/>
            <person name="Schwartz D.C."/>
            <person name="Cheng Z."/>
            <person name="Lindblad-Toh K."/>
            <person name="Eichler E.E."/>
            <person name="Ponting C.P."/>
        </authorList>
    </citation>
    <scope>NUCLEOTIDE SEQUENCE [LARGE SCALE GENOMIC DNA]</scope>
    <source>
        <strain>C57BL/6J</strain>
    </source>
</reference>
<reference key="5">
    <citation type="submission" date="2005-07" db="EMBL/GenBank/DDBJ databases">
        <authorList>
            <person name="Mural R.J."/>
            <person name="Adams M.D."/>
            <person name="Myers E.W."/>
            <person name="Smith H.O."/>
            <person name="Venter J.C."/>
        </authorList>
    </citation>
    <scope>NUCLEOTIDE SEQUENCE [LARGE SCALE GENOMIC DNA]</scope>
</reference>
<reference key="6">
    <citation type="journal article" date="2000" name="Nat. Cell Biol.">
        <title>The cell-polarity protein Par6 links Par3 and atypical protein kinase C to Cdc42.</title>
        <authorList>
            <person name="Joberty G."/>
            <person name="Petersen C."/>
            <person name="Gao L."/>
            <person name="Macara I.G."/>
        </authorList>
    </citation>
    <scope>INTERACTION WITH PARD6B</scope>
    <source>
        <tissue>Embryo</tissue>
    </source>
</reference>
<reference key="7">
    <citation type="journal article" date="2005" name="Proc. Natl. Acad. Sci. U.S.A.">
        <title>Control of T helper 2 cell function and allergic airway inflammation by PKCzeta.</title>
        <authorList>
            <person name="Martin P."/>
            <person name="Villares R."/>
            <person name="Rodriguez-Mascarenhas S."/>
            <person name="Zaballos A."/>
            <person name="Leitges M."/>
            <person name="Kovac J."/>
            <person name="Sizing I."/>
            <person name="Rennert P."/>
            <person name="Marquez G."/>
            <person name="Martinez-A C."/>
            <person name="Diaz-Meco M.T."/>
            <person name="Moscat J."/>
        </authorList>
    </citation>
    <scope>FUNCTION IN INFLAMMATORY RESPONSE</scope>
</reference>
<reference key="8">
    <citation type="journal article" date="2006" name="Biochem. J.">
        <title>A WD-FYVE protein binds to the kinases Akt and PKCzeta/lambda.</title>
        <authorList>
            <person name="Fritzius T."/>
            <person name="Burkard G."/>
            <person name="Haas E."/>
            <person name="Heinrich J."/>
            <person name="Schweneker M."/>
            <person name="Bosse M."/>
            <person name="Zimmermann S."/>
            <person name="Frey A.D."/>
            <person name="Caelers A."/>
            <person name="Bachmann A.S."/>
            <person name="Moelling K."/>
        </authorList>
    </citation>
    <scope>INTERACTION WITH WDFY2</scope>
</reference>
<reference key="9">
    <citation type="journal article" date="2007" name="FEBS J.">
        <title>WD-repeat-propeller-FYVE protein, ProF, binds VAMP2 and protein kinase Czeta.</title>
        <authorList>
            <person name="Fritzius T."/>
            <person name="Frey A.D."/>
            <person name="Schweneker M."/>
            <person name="Mayer D."/>
            <person name="Moelling K."/>
        </authorList>
    </citation>
    <scope>INTERACTION WITH VAMP2</scope>
    <scope>COMPLEX FORMATION WITH VAMP2 AND WDFY2</scope>
    <scope>SUBCELLULAR LOCATION</scope>
</reference>
<reference key="10">
    <citation type="journal article" date="2010" name="Cell">
        <title>A tissue-specific atlas of mouse protein phosphorylation and expression.</title>
        <authorList>
            <person name="Huttlin E.L."/>
            <person name="Jedrychowski M.P."/>
            <person name="Elias J.E."/>
            <person name="Goswami T."/>
            <person name="Rad R."/>
            <person name="Beausoleil S.A."/>
            <person name="Villen J."/>
            <person name="Haas W."/>
            <person name="Sowa M.E."/>
            <person name="Gygi S.P."/>
        </authorList>
    </citation>
    <scope>PHOSPHORYLATION [LARGE SCALE ANALYSIS] AT THR-560</scope>
    <scope>IDENTIFICATION BY MASS SPECTROMETRY [LARGE SCALE ANALYSIS]</scope>
    <source>
        <tissue>Kidney</tissue>
        <tissue>Lung</tissue>
    </source>
</reference>
<reference key="11">
    <citation type="journal article" date="2011" name="Nat. Immunol.">
        <title>Lysine methylation of the NF-kappaB subunit RelA by SETD6 couples activity of the histone methyltransferase GLP at chromatin to tonic repression of NF-kappaB signaling.</title>
        <authorList>
            <person name="Levy D."/>
            <person name="Kuo A.J."/>
            <person name="Chang Y."/>
            <person name="Schaefer U."/>
            <person name="Kitson C."/>
            <person name="Cheung P."/>
            <person name="Espejo A."/>
            <person name="Zee B.M."/>
            <person name="Liu C.L."/>
            <person name="Tangsombatvisit S."/>
            <person name="Tennen R.I."/>
            <person name="Kuo A.Y."/>
            <person name="Tanjing S."/>
            <person name="Cheung R."/>
            <person name="Chua K.F."/>
            <person name="Utz P.J."/>
            <person name="Shi X."/>
            <person name="Prinjha R.K."/>
            <person name="Lee K."/>
            <person name="Garcia B.A."/>
            <person name="Bedford M.T."/>
            <person name="Tarakhovsky A."/>
            <person name="Cheng X."/>
            <person name="Gozani O."/>
        </authorList>
    </citation>
    <scope>FUNCTION</scope>
</reference>
<reference key="12">
    <citation type="journal article" date="2013" name="Nature">
        <title>Prkcz null mice show normal learning and memory.</title>
        <authorList>
            <person name="Lee A.M."/>
            <person name="Kanter B.R."/>
            <person name="Wang D."/>
            <person name="Lim J.P."/>
            <person name="Zou M.E."/>
            <person name="Qiu C."/>
            <person name="McMahon T."/>
            <person name="Dadgar J."/>
            <person name="Fischbach-Weiss S.C."/>
            <person name="Messing R.O."/>
        </authorList>
    </citation>
    <scope>TISSUE SPECIFICITY (ISOFORMS 1 AND 2)</scope>
    <scope>DISRUPTION PHENOTYPE (ISOFORMS 1 AND 2)</scope>
</reference>
<reference key="13">
    <citation type="journal article" date="2016" name="Elife">
        <title>Compensation for PKMzeta in long-term potentiation and spatial long-term memory in mutant mice.</title>
        <authorList>
            <person name="Tsokas P."/>
            <person name="Hsieh C."/>
            <person name="Yao Y."/>
            <person name="Lesburgueres E."/>
            <person name="Wallace E.J.C."/>
            <person name="Tcherepanov A."/>
            <person name="Jothianandan D."/>
            <person name="Hartley B.R."/>
            <person name="Pan L."/>
            <person name="Rivard B."/>
            <person name="Farese R.V."/>
            <person name="Sajan M.P."/>
            <person name="Bergold P.J."/>
            <person name="Hernandez A.I."/>
            <person name="Cottrell J.E."/>
            <person name="Shouval H.Z."/>
            <person name="Fenton A.A."/>
            <person name="Sacktor T.C."/>
        </authorList>
    </citation>
    <scope>FUNCTION (ISOFORM 2)</scope>
    <scope>CATALYTIC ACTIVITY (ISOFORM 2)</scope>
    <scope>INDUCTION (ISOFORM 2)</scope>
    <scope>DISRUPTION PHENOTYPE (ISOFORMS 1 AND 2)</scope>
</reference>
<feature type="chain" id="PRO_0000055702" description="Protein kinase C zeta type">
    <location>
        <begin position="1"/>
        <end position="592"/>
    </location>
</feature>
<feature type="domain" description="PB1" evidence="7">
    <location>
        <begin position="15"/>
        <end position="98"/>
    </location>
</feature>
<feature type="domain" description="Protein kinase" evidence="4">
    <location>
        <begin position="252"/>
        <end position="518"/>
    </location>
</feature>
<feature type="domain" description="AGC-kinase C-terminal" evidence="6">
    <location>
        <begin position="519"/>
        <end position="590"/>
    </location>
</feature>
<feature type="zinc finger region" description="Phorbol-ester/DAG-type" evidence="5">
    <location>
        <begin position="130"/>
        <end position="180"/>
    </location>
</feature>
<feature type="region of interest" description="Interaction with SQSTM1" evidence="1">
    <location>
        <begin position="79"/>
        <end position="145"/>
    </location>
</feature>
<feature type="active site" description="Proton acceptor" evidence="4 8">
    <location>
        <position position="376"/>
    </location>
</feature>
<feature type="binding site" evidence="4">
    <location>
        <begin position="258"/>
        <end position="266"/>
    </location>
    <ligand>
        <name>ATP</name>
        <dbReference type="ChEBI" id="CHEBI:30616"/>
    </ligand>
</feature>
<feature type="binding site" evidence="4">
    <location>
        <position position="281"/>
    </location>
    <ligand>
        <name>ATP</name>
        <dbReference type="ChEBI" id="CHEBI:30616"/>
    </ligand>
</feature>
<feature type="modified residue" description="Phosphothreonine; by PDPK1 and PI3K" evidence="3">
    <location>
        <position position="410"/>
    </location>
</feature>
<feature type="modified residue" description="Phosphothreonine" evidence="20">
    <location>
        <position position="560"/>
    </location>
</feature>
<feature type="modified residue" description="Phosphoserine" evidence="2">
    <location>
        <position position="591"/>
    </location>
</feature>
<feature type="splice variant" id="VSP_059934" description="In isoform 2." evidence="19">
    <location>
        <begin position="1"/>
        <end position="183"/>
    </location>
</feature>
<feature type="sequence conflict" description="In Ref. 1; AAA39983 and 2; BAC76975." evidence="19" ref="1 2">
    <original>D</original>
    <variation>G</variation>
    <location>
        <position position="197"/>
    </location>
</feature>
<feature type="sequence conflict" description="In Ref. 3; BAE27832." evidence="19" ref="3">
    <original>H</original>
    <variation>R</variation>
    <location>
        <position position="487"/>
    </location>
</feature>
<accession>Q02956</accession>
<accession>A2AD76</accession>
<accession>Q3UHM5</accession>
<accession>Q7TST7</accession>